<evidence type="ECO:0000255" key="1">
    <source>
        <dbReference type="HAMAP-Rule" id="MF_01306"/>
    </source>
</evidence>
<evidence type="ECO:0000256" key="2">
    <source>
        <dbReference type="SAM" id="MobiDB-lite"/>
    </source>
</evidence>
<evidence type="ECO:0000305" key="3"/>
<protein>
    <recommendedName>
        <fullName evidence="1">Small ribosomal subunit protein uS4</fullName>
    </recommendedName>
    <alternativeName>
        <fullName evidence="3">30S ribosomal protein S4</fullName>
    </alternativeName>
</protein>
<organism>
    <name type="scientific">Rhodospirillum centenum (strain ATCC 51521 / SW)</name>
    <dbReference type="NCBI Taxonomy" id="414684"/>
    <lineage>
        <taxon>Bacteria</taxon>
        <taxon>Pseudomonadati</taxon>
        <taxon>Pseudomonadota</taxon>
        <taxon>Alphaproteobacteria</taxon>
        <taxon>Rhodospirillales</taxon>
        <taxon>Rhodospirillaceae</taxon>
        <taxon>Rhodospirillum</taxon>
    </lineage>
</organism>
<accession>B6ISG8</accession>
<proteinExistence type="inferred from homology"/>
<sequence length="204" mass="23354">MSKRQEAKYKIDRRLGVNLWGRAKSPVNKREYGPGQHGQRRKKPSDYGMQLMAKQKLKGYYGNIGEKQFRRLYQEAVRRKGDSGENLIQLLERRLDAVVYRMKFAATPFASRQLINHGHILVNGRRVNIPSYTVKDGDSIEVRSKAKQFAFVMEAAASGERDIPDYLSVDSQALKGTYVRAPGLADVPYPVQMEPNLVIEFYSR</sequence>
<feature type="chain" id="PRO_1000140782" description="Small ribosomal subunit protein uS4">
    <location>
        <begin position="1"/>
        <end position="204"/>
    </location>
</feature>
<feature type="domain" description="S4 RNA-binding" evidence="1">
    <location>
        <begin position="93"/>
        <end position="156"/>
    </location>
</feature>
<feature type="region of interest" description="Disordered" evidence="2">
    <location>
        <begin position="25"/>
        <end position="47"/>
    </location>
</feature>
<reference key="1">
    <citation type="submission" date="2007-03" db="EMBL/GenBank/DDBJ databases">
        <title>Genome sequence of Rhodospirillum centenum.</title>
        <authorList>
            <person name="Touchman J.W."/>
            <person name="Bauer C."/>
            <person name="Blankenship R.E."/>
        </authorList>
    </citation>
    <scope>NUCLEOTIDE SEQUENCE [LARGE SCALE GENOMIC DNA]</scope>
    <source>
        <strain>ATCC 51521 / SW</strain>
    </source>
</reference>
<comment type="function">
    <text evidence="1">One of the primary rRNA binding proteins, it binds directly to 16S rRNA where it nucleates assembly of the body of the 30S subunit.</text>
</comment>
<comment type="function">
    <text evidence="1">With S5 and S12 plays an important role in translational accuracy.</text>
</comment>
<comment type="subunit">
    <text evidence="1">Part of the 30S ribosomal subunit. Contacts protein S5. The interaction surface between S4 and S5 is involved in control of translational fidelity.</text>
</comment>
<comment type="similarity">
    <text evidence="1">Belongs to the universal ribosomal protein uS4 family.</text>
</comment>
<name>RS4_RHOCS</name>
<dbReference type="EMBL" id="CP000613">
    <property type="protein sequence ID" value="ACI98404.1"/>
    <property type="molecule type" value="Genomic_DNA"/>
</dbReference>
<dbReference type="RefSeq" id="WP_012566194.1">
    <property type="nucleotide sequence ID" value="NC_011420.2"/>
</dbReference>
<dbReference type="SMR" id="B6ISG8"/>
<dbReference type="STRING" id="414684.RC1_0980"/>
<dbReference type="KEGG" id="rce:RC1_0980"/>
<dbReference type="eggNOG" id="COG0522">
    <property type="taxonomic scope" value="Bacteria"/>
</dbReference>
<dbReference type="HOGENOM" id="CLU_092403_0_0_5"/>
<dbReference type="OrthoDB" id="9803672at2"/>
<dbReference type="Proteomes" id="UP000001591">
    <property type="component" value="Chromosome"/>
</dbReference>
<dbReference type="GO" id="GO:0015935">
    <property type="term" value="C:small ribosomal subunit"/>
    <property type="evidence" value="ECO:0007669"/>
    <property type="project" value="InterPro"/>
</dbReference>
<dbReference type="GO" id="GO:0019843">
    <property type="term" value="F:rRNA binding"/>
    <property type="evidence" value="ECO:0007669"/>
    <property type="project" value="UniProtKB-UniRule"/>
</dbReference>
<dbReference type="GO" id="GO:0003735">
    <property type="term" value="F:structural constituent of ribosome"/>
    <property type="evidence" value="ECO:0007669"/>
    <property type="project" value="InterPro"/>
</dbReference>
<dbReference type="GO" id="GO:0042274">
    <property type="term" value="P:ribosomal small subunit biogenesis"/>
    <property type="evidence" value="ECO:0007669"/>
    <property type="project" value="TreeGrafter"/>
</dbReference>
<dbReference type="GO" id="GO:0006412">
    <property type="term" value="P:translation"/>
    <property type="evidence" value="ECO:0007669"/>
    <property type="project" value="UniProtKB-UniRule"/>
</dbReference>
<dbReference type="CDD" id="cd00165">
    <property type="entry name" value="S4"/>
    <property type="match status" value="1"/>
</dbReference>
<dbReference type="FunFam" id="3.10.290.10:FF:000001">
    <property type="entry name" value="30S ribosomal protein S4"/>
    <property type="match status" value="1"/>
</dbReference>
<dbReference type="Gene3D" id="1.10.1050.10">
    <property type="entry name" value="Ribosomal Protein S4 Delta 41, Chain A, domain 1"/>
    <property type="match status" value="1"/>
</dbReference>
<dbReference type="Gene3D" id="3.10.290.10">
    <property type="entry name" value="RNA-binding S4 domain"/>
    <property type="match status" value="1"/>
</dbReference>
<dbReference type="HAMAP" id="MF_01306_B">
    <property type="entry name" value="Ribosomal_uS4_B"/>
    <property type="match status" value="1"/>
</dbReference>
<dbReference type="InterPro" id="IPR022801">
    <property type="entry name" value="Ribosomal_uS4"/>
</dbReference>
<dbReference type="InterPro" id="IPR005709">
    <property type="entry name" value="Ribosomal_uS4_bac-type"/>
</dbReference>
<dbReference type="InterPro" id="IPR018079">
    <property type="entry name" value="Ribosomal_uS4_CS"/>
</dbReference>
<dbReference type="InterPro" id="IPR001912">
    <property type="entry name" value="Ribosomal_uS4_N"/>
</dbReference>
<dbReference type="InterPro" id="IPR002942">
    <property type="entry name" value="S4_RNA-bd"/>
</dbReference>
<dbReference type="InterPro" id="IPR036986">
    <property type="entry name" value="S4_RNA-bd_sf"/>
</dbReference>
<dbReference type="NCBIfam" id="NF003717">
    <property type="entry name" value="PRK05327.1"/>
    <property type="match status" value="1"/>
</dbReference>
<dbReference type="NCBIfam" id="TIGR01017">
    <property type="entry name" value="rpsD_bact"/>
    <property type="match status" value="1"/>
</dbReference>
<dbReference type="PANTHER" id="PTHR11831">
    <property type="entry name" value="30S 40S RIBOSOMAL PROTEIN"/>
    <property type="match status" value="1"/>
</dbReference>
<dbReference type="PANTHER" id="PTHR11831:SF4">
    <property type="entry name" value="SMALL RIBOSOMAL SUBUNIT PROTEIN US4M"/>
    <property type="match status" value="1"/>
</dbReference>
<dbReference type="Pfam" id="PF00163">
    <property type="entry name" value="Ribosomal_S4"/>
    <property type="match status" value="1"/>
</dbReference>
<dbReference type="Pfam" id="PF01479">
    <property type="entry name" value="S4"/>
    <property type="match status" value="1"/>
</dbReference>
<dbReference type="SMART" id="SM01390">
    <property type="entry name" value="Ribosomal_S4"/>
    <property type="match status" value="1"/>
</dbReference>
<dbReference type="SMART" id="SM00363">
    <property type="entry name" value="S4"/>
    <property type="match status" value="1"/>
</dbReference>
<dbReference type="SUPFAM" id="SSF55174">
    <property type="entry name" value="Alpha-L RNA-binding motif"/>
    <property type="match status" value="1"/>
</dbReference>
<dbReference type="PROSITE" id="PS00632">
    <property type="entry name" value="RIBOSOMAL_S4"/>
    <property type="match status" value="1"/>
</dbReference>
<dbReference type="PROSITE" id="PS50889">
    <property type="entry name" value="S4"/>
    <property type="match status" value="1"/>
</dbReference>
<gene>
    <name evidence="1" type="primary">rpsD</name>
    <name type="ordered locus">RC1_0980</name>
</gene>
<keyword id="KW-1185">Reference proteome</keyword>
<keyword id="KW-0687">Ribonucleoprotein</keyword>
<keyword id="KW-0689">Ribosomal protein</keyword>
<keyword id="KW-0694">RNA-binding</keyword>
<keyword id="KW-0699">rRNA-binding</keyword>